<accession>Q8NL44</accession>
<comment type="subcellular location">
    <subcellularLocation>
        <location evidence="1">Cell membrane</location>
        <topology evidence="1">Multi-pass membrane protein</topology>
    </subcellularLocation>
</comment>
<comment type="similarity">
    <text evidence="1">Belongs to the UPF0391 family.</text>
</comment>
<protein>
    <recommendedName>
        <fullName evidence="1">UPF0391 membrane protein XAC0239</fullName>
    </recommendedName>
</protein>
<name>Y239_XANAC</name>
<evidence type="ECO:0000255" key="1">
    <source>
        <dbReference type="HAMAP-Rule" id="MF_01361"/>
    </source>
</evidence>
<reference key="1">
    <citation type="journal article" date="2002" name="Nature">
        <title>Comparison of the genomes of two Xanthomonas pathogens with differing host specificities.</title>
        <authorList>
            <person name="da Silva A.C.R."/>
            <person name="Ferro J.A."/>
            <person name="Reinach F.C."/>
            <person name="Farah C.S."/>
            <person name="Furlan L.R."/>
            <person name="Quaggio R.B."/>
            <person name="Monteiro-Vitorello C.B."/>
            <person name="Van Sluys M.A."/>
            <person name="Almeida N.F. Jr."/>
            <person name="Alves L.M.C."/>
            <person name="do Amaral A.M."/>
            <person name="Bertolini M.C."/>
            <person name="Camargo L.E.A."/>
            <person name="Camarotte G."/>
            <person name="Cannavan F."/>
            <person name="Cardozo J."/>
            <person name="Chambergo F."/>
            <person name="Ciapina L.P."/>
            <person name="Cicarelli R.M.B."/>
            <person name="Coutinho L.L."/>
            <person name="Cursino-Santos J.R."/>
            <person name="El-Dorry H."/>
            <person name="Faria J.B."/>
            <person name="Ferreira A.J.S."/>
            <person name="Ferreira R.C.C."/>
            <person name="Ferro M.I.T."/>
            <person name="Formighieri E.F."/>
            <person name="Franco M.C."/>
            <person name="Greggio C.C."/>
            <person name="Gruber A."/>
            <person name="Katsuyama A.M."/>
            <person name="Kishi L.T."/>
            <person name="Leite R.P."/>
            <person name="Lemos E.G.M."/>
            <person name="Lemos M.V.F."/>
            <person name="Locali E.C."/>
            <person name="Machado M.A."/>
            <person name="Madeira A.M.B.N."/>
            <person name="Martinez-Rossi N.M."/>
            <person name="Martins E.C."/>
            <person name="Meidanis J."/>
            <person name="Menck C.F.M."/>
            <person name="Miyaki C.Y."/>
            <person name="Moon D.H."/>
            <person name="Moreira L.M."/>
            <person name="Novo M.T.M."/>
            <person name="Okura V.K."/>
            <person name="Oliveira M.C."/>
            <person name="Oliveira V.R."/>
            <person name="Pereira H.A."/>
            <person name="Rossi A."/>
            <person name="Sena J.A.D."/>
            <person name="Silva C."/>
            <person name="de Souza R.F."/>
            <person name="Spinola L.A.F."/>
            <person name="Takita M.A."/>
            <person name="Tamura R.E."/>
            <person name="Teixeira E.C."/>
            <person name="Tezza R.I.D."/>
            <person name="Trindade dos Santos M."/>
            <person name="Truffi D."/>
            <person name="Tsai S.M."/>
            <person name="White F.F."/>
            <person name="Setubal J.C."/>
            <person name="Kitajima J.P."/>
        </authorList>
    </citation>
    <scope>NUCLEOTIDE SEQUENCE [LARGE SCALE GENOMIC DNA]</scope>
    <source>
        <strain>306</strain>
    </source>
</reference>
<keyword id="KW-1003">Cell membrane</keyword>
<keyword id="KW-0472">Membrane</keyword>
<keyword id="KW-0812">Transmembrane</keyword>
<keyword id="KW-1133">Transmembrane helix</keyword>
<feature type="chain" id="PRO_0000256796" description="UPF0391 membrane protein XAC0239">
    <location>
        <begin position="1"/>
        <end position="52"/>
    </location>
</feature>
<feature type="transmembrane region" description="Helical" evidence="1">
    <location>
        <begin position="5"/>
        <end position="25"/>
    </location>
</feature>
<feature type="transmembrane region" description="Helical" evidence="1">
    <location>
        <begin position="27"/>
        <end position="47"/>
    </location>
</feature>
<gene>
    <name type="ordered locus">XAC0239</name>
</gene>
<organism>
    <name type="scientific">Xanthomonas axonopodis pv. citri (strain 306)</name>
    <dbReference type="NCBI Taxonomy" id="190486"/>
    <lineage>
        <taxon>Bacteria</taxon>
        <taxon>Pseudomonadati</taxon>
        <taxon>Pseudomonadota</taxon>
        <taxon>Gammaproteobacteria</taxon>
        <taxon>Lysobacterales</taxon>
        <taxon>Lysobacteraceae</taxon>
        <taxon>Xanthomonas</taxon>
    </lineage>
</organism>
<dbReference type="EMBL" id="AE008923">
    <property type="protein sequence ID" value="AAM35131.1"/>
    <property type="molecule type" value="Genomic_DNA"/>
</dbReference>
<dbReference type="RefSeq" id="WP_003468167.1">
    <property type="nucleotide sequence ID" value="NC_003919.1"/>
</dbReference>
<dbReference type="KEGG" id="xac:XAC0239"/>
<dbReference type="eggNOG" id="COG5487">
    <property type="taxonomic scope" value="Bacteria"/>
</dbReference>
<dbReference type="HOGENOM" id="CLU_187346_0_1_6"/>
<dbReference type="Proteomes" id="UP000000576">
    <property type="component" value="Chromosome"/>
</dbReference>
<dbReference type="GO" id="GO:0005886">
    <property type="term" value="C:plasma membrane"/>
    <property type="evidence" value="ECO:0007669"/>
    <property type="project" value="UniProtKB-SubCell"/>
</dbReference>
<dbReference type="HAMAP" id="MF_01361">
    <property type="entry name" value="UPF0391"/>
    <property type="match status" value="1"/>
</dbReference>
<dbReference type="InterPro" id="IPR009760">
    <property type="entry name" value="DUF1328"/>
</dbReference>
<dbReference type="NCBIfam" id="NF010226">
    <property type="entry name" value="PRK13682.1-1"/>
    <property type="match status" value="1"/>
</dbReference>
<dbReference type="NCBIfam" id="NF010229">
    <property type="entry name" value="PRK13682.1-4"/>
    <property type="match status" value="1"/>
</dbReference>
<dbReference type="Pfam" id="PF07043">
    <property type="entry name" value="DUF1328"/>
    <property type="match status" value="1"/>
</dbReference>
<dbReference type="PIRSF" id="PIRSF036466">
    <property type="entry name" value="UCP036466"/>
    <property type="match status" value="1"/>
</dbReference>
<sequence length="52" mass="5640">MLHYAIIFFVIAIIAAVLGFSGIAGAATNIAWILFVVFLILAVISMFRRGKV</sequence>
<proteinExistence type="inferred from homology"/>